<name>NADE_ERWT9</name>
<reference key="1">
    <citation type="journal article" date="2008" name="Environ. Microbiol.">
        <title>The genome of Erwinia tasmaniensis strain Et1/99, a non-pathogenic bacterium in the genus Erwinia.</title>
        <authorList>
            <person name="Kube M."/>
            <person name="Migdoll A.M."/>
            <person name="Mueller I."/>
            <person name="Kuhl H."/>
            <person name="Beck A."/>
            <person name="Reinhardt R."/>
            <person name="Geider K."/>
        </authorList>
    </citation>
    <scope>NUCLEOTIDE SEQUENCE [LARGE SCALE GENOMIC DNA]</scope>
    <source>
        <strain>DSM 17950 / CFBP 7177 / CIP 109463 / NCPPB 4357 / Et1/99</strain>
    </source>
</reference>
<protein>
    <recommendedName>
        <fullName evidence="1">NH(3)-dependent NAD(+) synthetase</fullName>
        <ecNumber evidence="1">6.3.1.5</ecNumber>
    </recommendedName>
</protein>
<organism>
    <name type="scientific">Erwinia tasmaniensis (strain DSM 17950 / CFBP 7177 / CIP 109463 / NCPPB 4357 / Et1/99)</name>
    <dbReference type="NCBI Taxonomy" id="465817"/>
    <lineage>
        <taxon>Bacteria</taxon>
        <taxon>Pseudomonadati</taxon>
        <taxon>Pseudomonadota</taxon>
        <taxon>Gammaproteobacteria</taxon>
        <taxon>Enterobacterales</taxon>
        <taxon>Erwiniaceae</taxon>
        <taxon>Erwinia</taxon>
    </lineage>
</organism>
<accession>B2VEK0</accession>
<gene>
    <name evidence="1" type="primary">nadE</name>
    <name type="ordered locus">ETA_18510</name>
</gene>
<evidence type="ECO:0000255" key="1">
    <source>
        <dbReference type="HAMAP-Rule" id="MF_00193"/>
    </source>
</evidence>
<proteinExistence type="inferred from homology"/>
<dbReference type="EC" id="6.3.1.5" evidence="1"/>
<dbReference type="EMBL" id="CU468135">
    <property type="protein sequence ID" value="CAO96897.1"/>
    <property type="molecule type" value="Genomic_DNA"/>
</dbReference>
<dbReference type="RefSeq" id="WP_012441581.1">
    <property type="nucleotide sequence ID" value="NC_010694.1"/>
</dbReference>
<dbReference type="SMR" id="B2VEK0"/>
<dbReference type="STRING" id="465817.ETA_18510"/>
<dbReference type="KEGG" id="eta:ETA_18510"/>
<dbReference type="eggNOG" id="COG0171">
    <property type="taxonomic scope" value="Bacteria"/>
</dbReference>
<dbReference type="HOGENOM" id="CLU_059327_3_0_6"/>
<dbReference type="OrthoDB" id="3266517at2"/>
<dbReference type="UniPathway" id="UPA00253">
    <property type="reaction ID" value="UER00333"/>
</dbReference>
<dbReference type="Proteomes" id="UP000001726">
    <property type="component" value="Chromosome"/>
</dbReference>
<dbReference type="GO" id="GO:0005737">
    <property type="term" value="C:cytoplasm"/>
    <property type="evidence" value="ECO:0007669"/>
    <property type="project" value="InterPro"/>
</dbReference>
<dbReference type="GO" id="GO:0005524">
    <property type="term" value="F:ATP binding"/>
    <property type="evidence" value="ECO:0007669"/>
    <property type="project" value="UniProtKB-UniRule"/>
</dbReference>
<dbReference type="GO" id="GO:0004359">
    <property type="term" value="F:glutaminase activity"/>
    <property type="evidence" value="ECO:0007669"/>
    <property type="project" value="InterPro"/>
</dbReference>
<dbReference type="GO" id="GO:0046872">
    <property type="term" value="F:metal ion binding"/>
    <property type="evidence" value="ECO:0007669"/>
    <property type="project" value="UniProtKB-KW"/>
</dbReference>
<dbReference type="GO" id="GO:0003952">
    <property type="term" value="F:NAD+ synthase (glutamine-hydrolyzing) activity"/>
    <property type="evidence" value="ECO:0007669"/>
    <property type="project" value="InterPro"/>
</dbReference>
<dbReference type="GO" id="GO:0008795">
    <property type="term" value="F:NAD+ synthase activity"/>
    <property type="evidence" value="ECO:0007669"/>
    <property type="project" value="UniProtKB-UniRule"/>
</dbReference>
<dbReference type="GO" id="GO:0009435">
    <property type="term" value="P:NAD biosynthetic process"/>
    <property type="evidence" value="ECO:0007669"/>
    <property type="project" value="UniProtKB-UniRule"/>
</dbReference>
<dbReference type="CDD" id="cd00553">
    <property type="entry name" value="NAD_synthase"/>
    <property type="match status" value="1"/>
</dbReference>
<dbReference type="FunFam" id="3.40.50.620:FF:000015">
    <property type="entry name" value="NH(3)-dependent NAD(+) synthetase"/>
    <property type="match status" value="1"/>
</dbReference>
<dbReference type="Gene3D" id="3.40.50.620">
    <property type="entry name" value="HUPs"/>
    <property type="match status" value="1"/>
</dbReference>
<dbReference type="HAMAP" id="MF_00193">
    <property type="entry name" value="NadE_ammonia_dep"/>
    <property type="match status" value="1"/>
</dbReference>
<dbReference type="InterPro" id="IPR022310">
    <property type="entry name" value="NAD/GMP_synthase"/>
</dbReference>
<dbReference type="InterPro" id="IPR003694">
    <property type="entry name" value="NAD_synthase"/>
</dbReference>
<dbReference type="InterPro" id="IPR022926">
    <property type="entry name" value="NH(3)-dep_NAD(+)_synth"/>
</dbReference>
<dbReference type="InterPro" id="IPR014729">
    <property type="entry name" value="Rossmann-like_a/b/a_fold"/>
</dbReference>
<dbReference type="NCBIfam" id="TIGR00552">
    <property type="entry name" value="nadE"/>
    <property type="match status" value="1"/>
</dbReference>
<dbReference type="NCBIfam" id="NF001979">
    <property type="entry name" value="PRK00768.1"/>
    <property type="match status" value="1"/>
</dbReference>
<dbReference type="PANTHER" id="PTHR23090">
    <property type="entry name" value="NH 3 /GLUTAMINE-DEPENDENT NAD + SYNTHETASE"/>
    <property type="match status" value="1"/>
</dbReference>
<dbReference type="PANTHER" id="PTHR23090:SF7">
    <property type="entry name" value="NH(3)-DEPENDENT NAD(+) SYNTHETASE"/>
    <property type="match status" value="1"/>
</dbReference>
<dbReference type="Pfam" id="PF02540">
    <property type="entry name" value="NAD_synthase"/>
    <property type="match status" value="1"/>
</dbReference>
<dbReference type="SUPFAM" id="SSF52402">
    <property type="entry name" value="Adenine nucleotide alpha hydrolases-like"/>
    <property type="match status" value="1"/>
</dbReference>
<feature type="chain" id="PRO_1000099021" description="NH(3)-dependent NAD(+) synthetase">
    <location>
        <begin position="1"/>
        <end position="275"/>
    </location>
</feature>
<feature type="binding site" evidence="1">
    <location>
        <begin position="46"/>
        <end position="53"/>
    </location>
    <ligand>
        <name>ATP</name>
        <dbReference type="ChEBI" id="CHEBI:30616"/>
    </ligand>
</feature>
<feature type="binding site" evidence="1">
    <location>
        <position position="52"/>
    </location>
    <ligand>
        <name>Mg(2+)</name>
        <dbReference type="ChEBI" id="CHEBI:18420"/>
    </ligand>
</feature>
<feature type="binding site" evidence="1">
    <location>
        <position position="140"/>
    </location>
    <ligand>
        <name>deamido-NAD(+)</name>
        <dbReference type="ChEBI" id="CHEBI:58437"/>
    </ligand>
</feature>
<feature type="binding site" evidence="1">
    <location>
        <position position="160"/>
    </location>
    <ligand>
        <name>ATP</name>
        <dbReference type="ChEBI" id="CHEBI:30616"/>
    </ligand>
</feature>
<feature type="binding site" evidence="1">
    <location>
        <position position="165"/>
    </location>
    <ligand>
        <name>Mg(2+)</name>
        <dbReference type="ChEBI" id="CHEBI:18420"/>
    </ligand>
</feature>
<feature type="binding site" evidence="1">
    <location>
        <position position="173"/>
    </location>
    <ligand>
        <name>deamido-NAD(+)</name>
        <dbReference type="ChEBI" id="CHEBI:58437"/>
    </ligand>
</feature>
<feature type="binding site" evidence="1">
    <location>
        <position position="180"/>
    </location>
    <ligand>
        <name>deamido-NAD(+)</name>
        <dbReference type="ChEBI" id="CHEBI:58437"/>
    </ligand>
</feature>
<feature type="binding site" evidence="1">
    <location>
        <position position="189"/>
    </location>
    <ligand>
        <name>ATP</name>
        <dbReference type="ChEBI" id="CHEBI:30616"/>
    </ligand>
</feature>
<feature type="binding site" evidence="1">
    <location>
        <position position="211"/>
    </location>
    <ligand>
        <name>ATP</name>
        <dbReference type="ChEBI" id="CHEBI:30616"/>
    </ligand>
</feature>
<feature type="binding site" evidence="1">
    <location>
        <begin position="260"/>
        <end position="261"/>
    </location>
    <ligand>
        <name>deamido-NAD(+)</name>
        <dbReference type="ChEBI" id="CHEBI:58437"/>
    </ligand>
</feature>
<sequence length="275" mass="30536">MALQQDIIEALGVKPTIDADEEIRISVDFLKSYLKRYPFLKSLVLGISGGQDSTLTGKLCQMAMTELRAESGDSDYQFIAVRLPHGVQADEQDCQDAITFIQPDRVLTVNIKAAVQASEQALREAGITLSDFIRGNEKARERMKVQYSIAGMNAGVVVGTDHAAEAVTGFFTKYGDGGTDINPIFRLNKGQGKRLLNALGCPEHLWLKHPTADLEDDRPGLQDEVALGVTYEMIDRYLQGESIDPAAAKIIEGWYVKTEHKRRTPITVFDDFWKK</sequence>
<comment type="function">
    <text evidence="1">Catalyzes the ATP-dependent amidation of deamido-NAD to form NAD. Uses ammonia as a nitrogen source.</text>
</comment>
<comment type="catalytic activity">
    <reaction evidence="1">
        <text>deamido-NAD(+) + NH4(+) + ATP = AMP + diphosphate + NAD(+) + H(+)</text>
        <dbReference type="Rhea" id="RHEA:21188"/>
        <dbReference type="ChEBI" id="CHEBI:15378"/>
        <dbReference type="ChEBI" id="CHEBI:28938"/>
        <dbReference type="ChEBI" id="CHEBI:30616"/>
        <dbReference type="ChEBI" id="CHEBI:33019"/>
        <dbReference type="ChEBI" id="CHEBI:57540"/>
        <dbReference type="ChEBI" id="CHEBI:58437"/>
        <dbReference type="ChEBI" id="CHEBI:456215"/>
        <dbReference type="EC" id="6.3.1.5"/>
    </reaction>
</comment>
<comment type="pathway">
    <text evidence="1">Cofactor biosynthesis; NAD(+) biosynthesis; NAD(+) from deamido-NAD(+) (ammonia route): step 1/1.</text>
</comment>
<comment type="subunit">
    <text evidence="1">Homodimer.</text>
</comment>
<comment type="similarity">
    <text evidence="1">Belongs to the NAD synthetase family.</text>
</comment>
<keyword id="KW-0067">ATP-binding</keyword>
<keyword id="KW-0436">Ligase</keyword>
<keyword id="KW-0460">Magnesium</keyword>
<keyword id="KW-0479">Metal-binding</keyword>
<keyword id="KW-0520">NAD</keyword>
<keyword id="KW-0547">Nucleotide-binding</keyword>
<keyword id="KW-1185">Reference proteome</keyword>